<organism>
    <name type="scientific">Erythrobacter litoralis (strain HTCC2594)</name>
    <dbReference type="NCBI Taxonomy" id="314225"/>
    <lineage>
        <taxon>Bacteria</taxon>
        <taxon>Pseudomonadati</taxon>
        <taxon>Pseudomonadota</taxon>
        <taxon>Alphaproteobacteria</taxon>
        <taxon>Sphingomonadales</taxon>
        <taxon>Erythrobacteraceae</taxon>
        <taxon>Erythrobacter/Porphyrobacter group</taxon>
        <taxon>Erythrobacter</taxon>
    </lineage>
</organism>
<comment type="function">
    <text evidence="1">The RuvA-RuvB-RuvC complex processes Holliday junction (HJ) DNA during genetic recombination and DNA repair. Endonuclease that resolves HJ intermediates. Cleaves cruciform DNA by making single-stranded nicks across the HJ at symmetrical positions within the homologous arms, yielding a 5'-phosphate and a 3'-hydroxyl group; requires a central core of homology in the junction. The consensus cleavage sequence is 5'-(A/T)TT(C/G)-3'. Cleavage occurs on the 3'-side of the TT dinucleotide at the point of strand exchange. HJ branch migration catalyzed by RuvA-RuvB allows RuvC to scan DNA until it finds its consensus sequence, where it cleaves and resolves the cruciform DNA.</text>
</comment>
<comment type="catalytic activity">
    <reaction evidence="1">
        <text>Endonucleolytic cleavage at a junction such as a reciprocal single-stranded crossover between two homologous DNA duplexes (Holliday junction).</text>
        <dbReference type="EC" id="3.1.21.10"/>
    </reaction>
</comment>
<comment type="cofactor">
    <cofactor evidence="1">
        <name>Mg(2+)</name>
        <dbReference type="ChEBI" id="CHEBI:18420"/>
    </cofactor>
    <text evidence="1">Binds 2 Mg(2+) ion per subunit.</text>
</comment>
<comment type="subunit">
    <text evidence="1">Homodimer which binds Holliday junction (HJ) DNA. The HJ becomes 2-fold symmetrical on binding to RuvC with unstacked arms; it has a different conformation from HJ DNA in complex with RuvA. In the full resolvosome a probable DNA-RuvA(4)-RuvB(12)-RuvC(2) complex forms which resolves the HJ.</text>
</comment>
<comment type="subcellular location">
    <subcellularLocation>
        <location evidence="1">Cytoplasm</location>
    </subcellularLocation>
</comment>
<comment type="similarity">
    <text evidence="1">Belongs to the RuvC family.</text>
</comment>
<name>RUVC_ERYLH</name>
<accession>Q2N5P5</accession>
<reference key="1">
    <citation type="journal article" date="2009" name="J. Bacteriol.">
        <title>Complete genome sequence of Erythrobacter litoralis HTCC2594.</title>
        <authorList>
            <person name="Oh H.M."/>
            <person name="Giovannoni S.J."/>
            <person name="Ferriera S."/>
            <person name="Johnson J."/>
            <person name="Cho J.C."/>
        </authorList>
    </citation>
    <scope>NUCLEOTIDE SEQUENCE [LARGE SCALE GENOMIC DNA]</scope>
    <source>
        <strain>HTCC2594</strain>
    </source>
</reference>
<protein>
    <recommendedName>
        <fullName evidence="1">Crossover junction endodeoxyribonuclease RuvC</fullName>
        <ecNumber evidence="1">3.1.21.10</ecNumber>
    </recommendedName>
    <alternativeName>
        <fullName evidence="1">Holliday junction nuclease RuvC</fullName>
    </alternativeName>
    <alternativeName>
        <fullName evidence="1">Holliday junction resolvase RuvC</fullName>
    </alternativeName>
</protein>
<sequence>MTIILGLDPSLSCTGWGVIRAEGSRIAHVANGQVKTDAKAPIADRLHHLHAAIAAVIAAHDPDRAAAEEIFINKNPQSTLKLAQARGCVLAACAAGGLAVNEHAARLVKKSVVGTGGADKAQVQAMLKVLMPGAQVAGADAADALAVAIADANLRSIANLRSP</sequence>
<dbReference type="EC" id="3.1.21.10" evidence="1"/>
<dbReference type="EMBL" id="CP000157">
    <property type="protein sequence ID" value="ABC64996.1"/>
    <property type="molecule type" value="Genomic_DNA"/>
</dbReference>
<dbReference type="RefSeq" id="WP_011415818.1">
    <property type="nucleotide sequence ID" value="NC_007722.1"/>
</dbReference>
<dbReference type="SMR" id="Q2N5P5"/>
<dbReference type="STRING" id="314225.ELI_14520"/>
<dbReference type="KEGG" id="eli:ELI_14520"/>
<dbReference type="eggNOG" id="COG0817">
    <property type="taxonomic scope" value="Bacteria"/>
</dbReference>
<dbReference type="HOGENOM" id="CLU_091257_1_0_5"/>
<dbReference type="OrthoDB" id="9805499at2"/>
<dbReference type="Proteomes" id="UP000008808">
    <property type="component" value="Chromosome"/>
</dbReference>
<dbReference type="GO" id="GO:0005737">
    <property type="term" value="C:cytoplasm"/>
    <property type="evidence" value="ECO:0007669"/>
    <property type="project" value="UniProtKB-SubCell"/>
</dbReference>
<dbReference type="GO" id="GO:0048476">
    <property type="term" value="C:Holliday junction resolvase complex"/>
    <property type="evidence" value="ECO:0007669"/>
    <property type="project" value="UniProtKB-UniRule"/>
</dbReference>
<dbReference type="GO" id="GO:0008821">
    <property type="term" value="F:crossover junction DNA endonuclease activity"/>
    <property type="evidence" value="ECO:0007669"/>
    <property type="project" value="UniProtKB-UniRule"/>
</dbReference>
<dbReference type="GO" id="GO:0003677">
    <property type="term" value="F:DNA binding"/>
    <property type="evidence" value="ECO:0007669"/>
    <property type="project" value="UniProtKB-KW"/>
</dbReference>
<dbReference type="GO" id="GO:0000287">
    <property type="term" value="F:magnesium ion binding"/>
    <property type="evidence" value="ECO:0007669"/>
    <property type="project" value="UniProtKB-UniRule"/>
</dbReference>
<dbReference type="GO" id="GO:0006310">
    <property type="term" value="P:DNA recombination"/>
    <property type="evidence" value="ECO:0007669"/>
    <property type="project" value="UniProtKB-UniRule"/>
</dbReference>
<dbReference type="GO" id="GO:0006281">
    <property type="term" value="P:DNA repair"/>
    <property type="evidence" value="ECO:0007669"/>
    <property type="project" value="UniProtKB-UniRule"/>
</dbReference>
<dbReference type="CDD" id="cd16962">
    <property type="entry name" value="RuvC"/>
    <property type="match status" value="1"/>
</dbReference>
<dbReference type="FunFam" id="3.30.420.10:FF:000002">
    <property type="entry name" value="Crossover junction endodeoxyribonuclease RuvC"/>
    <property type="match status" value="1"/>
</dbReference>
<dbReference type="Gene3D" id="3.30.420.10">
    <property type="entry name" value="Ribonuclease H-like superfamily/Ribonuclease H"/>
    <property type="match status" value="1"/>
</dbReference>
<dbReference type="HAMAP" id="MF_00034">
    <property type="entry name" value="RuvC"/>
    <property type="match status" value="1"/>
</dbReference>
<dbReference type="InterPro" id="IPR012337">
    <property type="entry name" value="RNaseH-like_sf"/>
</dbReference>
<dbReference type="InterPro" id="IPR036397">
    <property type="entry name" value="RNaseH_sf"/>
</dbReference>
<dbReference type="InterPro" id="IPR020563">
    <property type="entry name" value="X-over_junc_endoDNase_Mg_BS"/>
</dbReference>
<dbReference type="InterPro" id="IPR002176">
    <property type="entry name" value="X-over_junc_endoDNase_RuvC"/>
</dbReference>
<dbReference type="NCBIfam" id="TIGR00228">
    <property type="entry name" value="ruvC"/>
    <property type="match status" value="1"/>
</dbReference>
<dbReference type="PANTHER" id="PTHR30194">
    <property type="entry name" value="CROSSOVER JUNCTION ENDODEOXYRIBONUCLEASE RUVC"/>
    <property type="match status" value="1"/>
</dbReference>
<dbReference type="PANTHER" id="PTHR30194:SF3">
    <property type="entry name" value="CROSSOVER JUNCTION ENDODEOXYRIBONUCLEASE RUVC"/>
    <property type="match status" value="1"/>
</dbReference>
<dbReference type="Pfam" id="PF02075">
    <property type="entry name" value="RuvC"/>
    <property type="match status" value="1"/>
</dbReference>
<dbReference type="PRINTS" id="PR00696">
    <property type="entry name" value="RSOLVASERUVC"/>
</dbReference>
<dbReference type="SUPFAM" id="SSF53098">
    <property type="entry name" value="Ribonuclease H-like"/>
    <property type="match status" value="1"/>
</dbReference>
<dbReference type="PROSITE" id="PS01321">
    <property type="entry name" value="RUVC"/>
    <property type="match status" value="1"/>
</dbReference>
<evidence type="ECO:0000255" key="1">
    <source>
        <dbReference type="HAMAP-Rule" id="MF_00034"/>
    </source>
</evidence>
<keyword id="KW-0963">Cytoplasm</keyword>
<keyword id="KW-0227">DNA damage</keyword>
<keyword id="KW-0233">DNA recombination</keyword>
<keyword id="KW-0234">DNA repair</keyword>
<keyword id="KW-0238">DNA-binding</keyword>
<keyword id="KW-0255">Endonuclease</keyword>
<keyword id="KW-0378">Hydrolase</keyword>
<keyword id="KW-0460">Magnesium</keyword>
<keyword id="KW-0479">Metal-binding</keyword>
<keyword id="KW-0540">Nuclease</keyword>
<keyword id="KW-1185">Reference proteome</keyword>
<feature type="chain" id="PRO_1000002754" description="Crossover junction endodeoxyribonuclease RuvC">
    <location>
        <begin position="1"/>
        <end position="163"/>
    </location>
</feature>
<feature type="active site" evidence="1">
    <location>
        <position position="8"/>
    </location>
</feature>
<feature type="active site" evidence="1">
    <location>
        <position position="68"/>
    </location>
</feature>
<feature type="active site" evidence="1">
    <location>
        <position position="140"/>
    </location>
</feature>
<feature type="binding site" evidence="1">
    <location>
        <position position="8"/>
    </location>
    <ligand>
        <name>Mg(2+)</name>
        <dbReference type="ChEBI" id="CHEBI:18420"/>
        <label>1</label>
    </ligand>
</feature>
<feature type="binding site" evidence="1">
    <location>
        <position position="68"/>
    </location>
    <ligand>
        <name>Mg(2+)</name>
        <dbReference type="ChEBI" id="CHEBI:18420"/>
        <label>2</label>
    </ligand>
</feature>
<feature type="binding site" evidence="1">
    <location>
        <position position="140"/>
    </location>
    <ligand>
        <name>Mg(2+)</name>
        <dbReference type="ChEBI" id="CHEBI:18420"/>
        <label>1</label>
    </ligand>
</feature>
<gene>
    <name evidence="1" type="primary">ruvC</name>
    <name type="ordered locus">ELI_14520</name>
</gene>
<proteinExistence type="inferred from homology"/>